<gene>
    <name evidence="1" type="primary">rpoB</name>
    <name type="ordered locus">Grc000136</name>
</gene>
<evidence type="ECO:0000255" key="1">
    <source>
        <dbReference type="HAMAP-Rule" id="MF_01321"/>
    </source>
</evidence>
<name>RPOB_GRATL</name>
<comment type="function">
    <text evidence="1">DNA-dependent RNA polymerase catalyzes the transcription of DNA into RNA using the four ribonucleoside triphosphates as substrates.</text>
</comment>
<comment type="catalytic activity">
    <reaction evidence="1">
        <text>RNA(n) + a ribonucleoside 5'-triphosphate = RNA(n+1) + diphosphate</text>
        <dbReference type="Rhea" id="RHEA:21248"/>
        <dbReference type="Rhea" id="RHEA-COMP:14527"/>
        <dbReference type="Rhea" id="RHEA-COMP:17342"/>
        <dbReference type="ChEBI" id="CHEBI:33019"/>
        <dbReference type="ChEBI" id="CHEBI:61557"/>
        <dbReference type="ChEBI" id="CHEBI:140395"/>
        <dbReference type="EC" id="2.7.7.6"/>
    </reaction>
</comment>
<comment type="subunit">
    <text evidence="1">In plastids the minimal PEP RNA polymerase catalytic core is composed of four subunits: alpha, beta, beta', and beta''. When a (nuclear-encoded) sigma factor is associated with the core the holoenzyme is formed, which can initiate transcription.</text>
</comment>
<comment type="subcellular location">
    <subcellularLocation>
        <location>Plastid</location>
        <location>Chloroplast</location>
    </subcellularLocation>
</comment>
<comment type="similarity">
    <text evidence="1">Belongs to the RNA polymerase beta chain family.</text>
</comment>
<organism>
    <name type="scientific">Gracilaria tenuistipitata var. liui</name>
    <name type="common">Red alga</name>
    <dbReference type="NCBI Taxonomy" id="285951"/>
    <lineage>
        <taxon>Eukaryota</taxon>
        <taxon>Rhodophyta</taxon>
        <taxon>Florideophyceae</taxon>
        <taxon>Rhodymeniophycidae</taxon>
        <taxon>Gracilariales</taxon>
        <taxon>Gracilariaceae</taxon>
        <taxon>Gracilaria</taxon>
        <taxon>Gracilaria tenuistipitata</taxon>
    </lineage>
</organism>
<protein>
    <recommendedName>
        <fullName evidence="1">DNA-directed RNA polymerase subunit beta</fullName>
        <ecNumber evidence="1">2.7.7.6</ecNumber>
    </recommendedName>
    <alternativeName>
        <fullName evidence="1">PEP</fullName>
    </alternativeName>
    <alternativeName>
        <fullName evidence="1">Plastid-encoded RNA polymerase subunit beta</fullName>
        <shortName evidence="1">RNA polymerase subunit beta</shortName>
    </alternativeName>
</protein>
<keyword id="KW-0150">Chloroplast</keyword>
<keyword id="KW-0240">DNA-directed RNA polymerase</keyword>
<keyword id="KW-0548">Nucleotidyltransferase</keyword>
<keyword id="KW-0934">Plastid</keyword>
<keyword id="KW-0804">Transcription</keyword>
<keyword id="KW-0808">Transferase</keyword>
<proteinExistence type="inferred from homology"/>
<dbReference type="EC" id="2.7.7.6" evidence="1"/>
<dbReference type="EMBL" id="AY673996">
    <property type="protein sequence ID" value="AAT79717.1"/>
    <property type="molecule type" value="Genomic_DNA"/>
</dbReference>
<dbReference type="RefSeq" id="YP_063642.1">
    <property type="nucleotide sequence ID" value="NC_006137.1"/>
</dbReference>
<dbReference type="SMR" id="Q6B8R8"/>
<dbReference type="GeneID" id="2944076"/>
<dbReference type="GO" id="GO:0009507">
    <property type="term" value="C:chloroplast"/>
    <property type="evidence" value="ECO:0007669"/>
    <property type="project" value="UniProtKB-SubCell"/>
</dbReference>
<dbReference type="GO" id="GO:0000428">
    <property type="term" value="C:DNA-directed RNA polymerase complex"/>
    <property type="evidence" value="ECO:0007669"/>
    <property type="project" value="UniProtKB-KW"/>
</dbReference>
<dbReference type="GO" id="GO:0005739">
    <property type="term" value="C:mitochondrion"/>
    <property type="evidence" value="ECO:0007669"/>
    <property type="project" value="GOC"/>
</dbReference>
<dbReference type="GO" id="GO:0003677">
    <property type="term" value="F:DNA binding"/>
    <property type="evidence" value="ECO:0007669"/>
    <property type="project" value="UniProtKB-UniRule"/>
</dbReference>
<dbReference type="GO" id="GO:0003899">
    <property type="term" value="F:DNA-directed RNA polymerase activity"/>
    <property type="evidence" value="ECO:0007669"/>
    <property type="project" value="UniProtKB-UniRule"/>
</dbReference>
<dbReference type="GO" id="GO:0032549">
    <property type="term" value="F:ribonucleoside binding"/>
    <property type="evidence" value="ECO:0007669"/>
    <property type="project" value="InterPro"/>
</dbReference>
<dbReference type="GO" id="GO:0006351">
    <property type="term" value="P:DNA-templated transcription"/>
    <property type="evidence" value="ECO:0007669"/>
    <property type="project" value="UniProtKB-UniRule"/>
</dbReference>
<dbReference type="CDD" id="cd00653">
    <property type="entry name" value="RNA_pol_B_RPB2"/>
    <property type="match status" value="1"/>
</dbReference>
<dbReference type="Gene3D" id="2.40.50.100">
    <property type="match status" value="1"/>
</dbReference>
<dbReference type="Gene3D" id="2.40.50.150">
    <property type="match status" value="1"/>
</dbReference>
<dbReference type="Gene3D" id="3.90.1100.10">
    <property type="match status" value="1"/>
</dbReference>
<dbReference type="Gene3D" id="2.30.150.10">
    <property type="entry name" value="DNA-directed RNA polymerase, beta subunit, external 1 domain"/>
    <property type="match status" value="1"/>
</dbReference>
<dbReference type="Gene3D" id="2.40.270.10">
    <property type="entry name" value="DNA-directed RNA polymerase, subunit 2, domain 6"/>
    <property type="match status" value="1"/>
</dbReference>
<dbReference type="Gene3D" id="3.90.1800.10">
    <property type="entry name" value="RNA polymerase alpha subunit dimerisation domain"/>
    <property type="match status" value="1"/>
</dbReference>
<dbReference type="Gene3D" id="3.90.1110.10">
    <property type="entry name" value="RNA polymerase Rpb2, domain 2"/>
    <property type="match status" value="1"/>
</dbReference>
<dbReference type="HAMAP" id="MF_01321">
    <property type="entry name" value="RNApol_bact_RpoB"/>
    <property type="match status" value="1"/>
</dbReference>
<dbReference type="InterPro" id="IPR042107">
    <property type="entry name" value="DNA-dir_RNA_pol_bsu_ext_1_sf"/>
</dbReference>
<dbReference type="InterPro" id="IPR019462">
    <property type="entry name" value="DNA-dir_RNA_pol_bsu_external_1"/>
</dbReference>
<dbReference type="InterPro" id="IPR015712">
    <property type="entry name" value="DNA-dir_RNA_pol_su2"/>
</dbReference>
<dbReference type="InterPro" id="IPR007120">
    <property type="entry name" value="DNA-dir_RNAP_su2_dom"/>
</dbReference>
<dbReference type="InterPro" id="IPR037033">
    <property type="entry name" value="DNA-dir_RNAP_su2_hyb_sf"/>
</dbReference>
<dbReference type="InterPro" id="IPR010243">
    <property type="entry name" value="RNA_pol_bsu_bac"/>
</dbReference>
<dbReference type="InterPro" id="IPR007121">
    <property type="entry name" value="RNA_pol_bsu_CS"/>
</dbReference>
<dbReference type="InterPro" id="IPR007644">
    <property type="entry name" value="RNA_pol_bsu_protrusion"/>
</dbReference>
<dbReference type="InterPro" id="IPR007642">
    <property type="entry name" value="RNA_pol_Rpb2_2"/>
</dbReference>
<dbReference type="InterPro" id="IPR037034">
    <property type="entry name" value="RNA_pol_Rpb2_2_sf"/>
</dbReference>
<dbReference type="InterPro" id="IPR007645">
    <property type="entry name" value="RNA_pol_Rpb2_3"/>
</dbReference>
<dbReference type="InterPro" id="IPR007641">
    <property type="entry name" value="RNA_pol_Rpb2_7"/>
</dbReference>
<dbReference type="InterPro" id="IPR014724">
    <property type="entry name" value="RNA_pol_RPB2_OB-fold"/>
</dbReference>
<dbReference type="NCBIfam" id="NF001616">
    <property type="entry name" value="PRK00405.1"/>
    <property type="match status" value="1"/>
</dbReference>
<dbReference type="NCBIfam" id="TIGR02013">
    <property type="entry name" value="rpoB"/>
    <property type="match status" value="1"/>
</dbReference>
<dbReference type="PANTHER" id="PTHR20856">
    <property type="entry name" value="DNA-DIRECTED RNA POLYMERASE I SUBUNIT 2"/>
    <property type="match status" value="1"/>
</dbReference>
<dbReference type="Pfam" id="PF04563">
    <property type="entry name" value="RNA_pol_Rpb2_1"/>
    <property type="match status" value="1"/>
</dbReference>
<dbReference type="Pfam" id="PF04561">
    <property type="entry name" value="RNA_pol_Rpb2_2"/>
    <property type="match status" value="1"/>
</dbReference>
<dbReference type="Pfam" id="PF04565">
    <property type="entry name" value="RNA_pol_Rpb2_3"/>
    <property type="match status" value="1"/>
</dbReference>
<dbReference type="Pfam" id="PF10385">
    <property type="entry name" value="RNA_pol_Rpb2_45"/>
    <property type="match status" value="1"/>
</dbReference>
<dbReference type="Pfam" id="PF00562">
    <property type="entry name" value="RNA_pol_Rpb2_6"/>
    <property type="match status" value="1"/>
</dbReference>
<dbReference type="Pfam" id="PF04560">
    <property type="entry name" value="RNA_pol_Rpb2_7"/>
    <property type="match status" value="1"/>
</dbReference>
<dbReference type="SUPFAM" id="SSF64484">
    <property type="entry name" value="beta and beta-prime subunits of DNA dependent RNA-polymerase"/>
    <property type="match status" value="1"/>
</dbReference>
<dbReference type="PROSITE" id="PS01166">
    <property type="entry name" value="RNA_POL_BETA"/>
    <property type="match status" value="1"/>
</dbReference>
<accession>Q6B8R8</accession>
<sequence>MRLLMSQEIMFKYIFPDLAAIQKESFKSFLLEGLSEVLDSFPIIVDPTGKLELQFFGKDYKLKFPRYSVRKAKSRDKTYSAQIYIPAKLTRRDIEVIKENISTSKDLSYFFNSQDINKKYRKRPVFIGDLPLMTNRGTFVISGTERIIINQIVRSPGVYYKKELDKNNKQIYSCSIISNRGSWLKFEIDSKAQIWAKIDKNHKVSAYIFLRSIGLNNEDIRKRLTKYNYLINSSLTYYKKEFSKDVNNVDIEKITEEEALVIVYSKLRPNEPATLAVAKQMLYTRFFDPKRYDLGAVGRHKINQKLNLKVPTHFRVLSPEDILVSLDYLLNIKEQNIGTFDDIDHLGNRRVRSVGELLQNQVRIGLNRLERIIRERMIICDLDSLSLSNLVNPKPLMASVREFFSSSQLSQFMDQTNPLSELTHKRRISALGPGGLNKDRAGFAVRDLHPSHYGRICPIETPEGPNAGLIGSLSIYAKVNRYGFIETPCYKVTDGQVLKKDKLYYITADQEDYLRIAPADISLDVNDFIQDKIIAVRYKQEFITATISQVDYMAVSPIQFISAATSLIPFLEHDDANRALMGSNMQRQAVPLLFPEKSIVGTGLEAKIAKDSGMTIISRTNGTVSYVSGTKIGIQNKEGYTIHYRLKKYYRSNQDTCINQRPIVWPGENIRIGQTIADGASTDGGEIALGRNIIVAYMPWEGYNYEDAFLISERLVYEDLYTSIHIERYELECRQTKLGSEEITRDIPNVSEASIGLLDKNGIISIGSWVDAGDILVGKVTPKGESDQLPEGKLLRAIFGEKARDVRDTSLRLPNATKGRVVNVKIFKRQKGDELPPGTNEIIRVYVAQKRKIQVGDKMAGRHGNKGIISRILSLQDMPFLPDGTPVDIILNPLGVPSRMNVGQLFECLLGLAGEYSSKRFKIIPFDEMYGSEASRALVYNKLKQASSMNDKSWLFNALHPGKVMLVDGRTGEFFDNPVTVGKAYILKLVHLVDDKIHARSTGPYSLVTQQPLGGRAQHGGQRLGEMEVWALEAFGAAYTLQELLTVKSDDMQGRNDALNAIVKGKPIPKPGTPESFKVLMRELQSLALDIAVHKLELLDNGNKASIEIDLMSDEQVSAI</sequence>
<feature type="chain" id="PRO_0000048023" description="DNA-directed RNA polymerase subunit beta">
    <location>
        <begin position="1"/>
        <end position="1120"/>
    </location>
</feature>
<geneLocation type="chloroplast"/>
<reference key="1">
    <citation type="journal article" date="2004" name="J. Mol. Evol.">
        <title>Comparative analysis of the complete plastid genome sequence of the red alga Gracilaria tenuistipitata var. liui provides insights into the evolution of rhodoplasts and their relationship to other plastids.</title>
        <authorList>
            <person name="Hagopian J.C."/>
            <person name="Reis M."/>
            <person name="Kitajima J.P."/>
            <person name="Bhattacharya D."/>
            <person name="de Oliveira M.C."/>
        </authorList>
    </citation>
    <scope>NUCLEOTIDE SEQUENCE [LARGE SCALE GENOMIC DNA]</scope>
</reference>